<name>COQ7_COXBN</name>
<sequence length="215" mass="23917">MSNNSRHYSAIDEAILQGQAMLETLFGKPVAQRENPAKGLSQPALTSAEKKQSIGFMRVNHSGEVCAQALYHGQMATAKNPAVRALFTTAAKEETDHLAWCQERLEELGGHTSYLNAFWYTNSFLIGLLAGLSGDPLSLGFVEETEKQVEIHLADHLRKIPSSDLKSRKIVEYMQQDEIQHGLNARSSGAKELPYLVKKLMAFHAKVMTTLAYWI</sequence>
<organism>
    <name type="scientific">Coxiella burnetii (strain Dugway 5J108-111)</name>
    <dbReference type="NCBI Taxonomy" id="434922"/>
    <lineage>
        <taxon>Bacteria</taxon>
        <taxon>Pseudomonadati</taxon>
        <taxon>Pseudomonadota</taxon>
        <taxon>Gammaproteobacteria</taxon>
        <taxon>Legionellales</taxon>
        <taxon>Coxiellaceae</taxon>
        <taxon>Coxiella</taxon>
    </lineage>
</organism>
<proteinExistence type="inferred from homology"/>
<accession>A9KB88</accession>
<reference key="1">
    <citation type="journal article" date="2009" name="Infect. Immun.">
        <title>Comparative genomics reveal extensive transposon-mediated genomic plasticity and diversity among potential effector proteins within the genus Coxiella.</title>
        <authorList>
            <person name="Beare P.A."/>
            <person name="Unsworth N."/>
            <person name="Andoh M."/>
            <person name="Voth D.E."/>
            <person name="Omsland A."/>
            <person name="Gilk S.D."/>
            <person name="Williams K.P."/>
            <person name="Sobral B.W."/>
            <person name="Kupko J.J. III"/>
            <person name="Porcella S.F."/>
            <person name="Samuel J.E."/>
            <person name="Heinzen R.A."/>
        </authorList>
    </citation>
    <scope>NUCLEOTIDE SEQUENCE [LARGE SCALE GENOMIC DNA]</scope>
    <source>
        <strain>Dugway 5J108-111</strain>
    </source>
</reference>
<gene>
    <name evidence="1" type="primary">coq7</name>
    <name type="ordered locus">CBUD_0102</name>
</gene>
<protein>
    <recommendedName>
        <fullName evidence="1">3-demethoxyubiquinol 3-hydroxylase</fullName>
        <shortName evidence="1">DMQ hydroxylase</shortName>
        <ecNumber evidence="1">1.14.99.60</ecNumber>
    </recommendedName>
    <alternativeName>
        <fullName evidence="1">2-nonaprenyl-3-methyl-6-methoxy-1,4-benzoquinol hydroxylase</fullName>
    </alternativeName>
</protein>
<comment type="function">
    <text evidence="1">Catalyzes the hydroxylation of 2-nonaprenyl-3-methyl-6-methoxy-1,4-benzoquinol during ubiquinone biosynthesis.</text>
</comment>
<comment type="catalytic activity">
    <reaction evidence="1">
        <text>a 5-methoxy-2-methyl-3-(all-trans-polyprenyl)benzene-1,4-diol + AH2 + O2 = a 3-demethylubiquinol + A + H2O</text>
        <dbReference type="Rhea" id="RHEA:50908"/>
        <dbReference type="Rhea" id="RHEA-COMP:10859"/>
        <dbReference type="Rhea" id="RHEA-COMP:10914"/>
        <dbReference type="ChEBI" id="CHEBI:13193"/>
        <dbReference type="ChEBI" id="CHEBI:15377"/>
        <dbReference type="ChEBI" id="CHEBI:15379"/>
        <dbReference type="ChEBI" id="CHEBI:17499"/>
        <dbReference type="ChEBI" id="CHEBI:84167"/>
        <dbReference type="ChEBI" id="CHEBI:84422"/>
        <dbReference type="EC" id="1.14.99.60"/>
    </reaction>
</comment>
<comment type="cofactor">
    <cofactor evidence="1">
        <name>Fe cation</name>
        <dbReference type="ChEBI" id="CHEBI:24875"/>
    </cofactor>
    <text evidence="1">Binds 2 iron ions per subunit.</text>
</comment>
<comment type="pathway">
    <text evidence="1">Cofactor biosynthesis; ubiquinone biosynthesis.</text>
</comment>
<comment type="subcellular location">
    <subcellularLocation>
        <location evidence="1">Cell membrane</location>
        <topology evidence="1">Peripheral membrane protein</topology>
    </subcellularLocation>
</comment>
<comment type="similarity">
    <text evidence="1">Belongs to the COQ7 family.</text>
</comment>
<keyword id="KW-1003">Cell membrane</keyword>
<keyword id="KW-0408">Iron</keyword>
<keyword id="KW-0472">Membrane</keyword>
<keyword id="KW-0479">Metal-binding</keyword>
<keyword id="KW-0503">Monooxygenase</keyword>
<keyword id="KW-0560">Oxidoreductase</keyword>
<keyword id="KW-0831">Ubiquinone biosynthesis</keyword>
<feature type="chain" id="PRO_0000338681" description="3-demethoxyubiquinol 3-hydroxylase">
    <location>
        <begin position="1"/>
        <end position="215"/>
    </location>
</feature>
<feature type="binding site" evidence="1">
    <location>
        <position position="64"/>
    </location>
    <ligand>
        <name>Fe cation</name>
        <dbReference type="ChEBI" id="CHEBI:24875"/>
        <label>1</label>
    </ligand>
</feature>
<feature type="binding site" evidence="1">
    <location>
        <position position="94"/>
    </location>
    <ligand>
        <name>Fe cation</name>
        <dbReference type="ChEBI" id="CHEBI:24875"/>
        <label>1</label>
    </ligand>
</feature>
<feature type="binding site" evidence="1">
    <location>
        <position position="94"/>
    </location>
    <ligand>
        <name>Fe cation</name>
        <dbReference type="ChEBI" id="CHEBI:24875"/>
        <label>2</label>
    </ligand>
</feature>
<feature type="binding site" evidence="1">
    <location>
        <position position="97"/>
    </location>
    <ligand>
        <name>Fe cation</name>
        <dbReference type="ChEBI" id="CHEBI:24875"/>
        <label>1</label>
    </ligand>
</feature>
<feature type="binding site" evidence="1">
    <location>
        <position position="146"/>
    </location>
    <ligand>
        <name>Fe cation</name>
        <dbReference type="ChEBI" id="CHEBI:24875"/>
        <label>2</label>
    </ligand>
</feature>
<feature type="binding site" evidence="1">
    <location>
        <position position="178"/>
    </location>
    <ligand>
        <name>Fe cation</name>
        <dbReference type="ChEBI" id="CHEBI:24875"/>
        <label>1</label>
    </ligand>
</feature>
<feature type="binding site" evidence="1">
    <location>
        <position position="178"/>
    </location>
    <ligand>
        <name>Fe cation</name>
        <dbReference type="ChEBI" id="CHEBI:24875"/>
        <label>2</label>
    </ligand>
</feature>
<feature type="binding site" evidence="1">
    <location>
        <position position="181"/>
    </location>
    <ligand>
        <name>Fe cation</name>
        <dbReference type="ChEBI" id="CHEBI:24875"/>
        <label>2</label>
    </ligand>
</feature>
<dbReference type="EC" id="1.14.99.60" evidence="1"/>
<dbReference type="EMBL" id="CP000733">
    <property type="protein sequence ID" value="ABS77640.1"/>
    <property type="molecule type" value="Genomic_DNA"/>
</dbReference>
<dbReference type="RefSeq" id="WP_011996408.1">
    <property type="nucleotide sequence ID" value="NC_009727.1"/>
</dbReference>
<dbReference type="SMR" id="A9KB88"/>
<dbReference type="KEGG" id="cbd:CBUD_0102"/>
<dbReference type="HOGENOM" id="CLU_088601_0_0_6"/>
<dbReference type="UniPathway" id="UPA00232"/>
<dbReference type="Proteomes" id="UP000008555">
    <property type="component" value="Chromosome"/>
</dbReference>
<dbReference type="GO" id="GO:0005886">
    <property type="term" value="C:plasma membrane"/>
    <property type="evidence" value="ECO:0007669"/>
    <property type="project" value="UniProtKB-SubCell"/>
</dbReference>
<dbReference type="GO" id="GO:0008682">
    <property type="term" value="F:3-demethoxyubiquinol 3-hydroxylase activity"/>
    <property type="evidence" value="ECO:0007669"/>
    <property type="project" value="UniProtKB-EC"/>
</dbReference>
<dbReference type="GO" id="GO:0046872">
    <property type="term" value="F:metal ion binding"/>
    <property type="evidence" value="ECO:0007669"/>
    <property type="project" value="UniProtKB-KW"/>
</dbReference>
<dbReference type="GO" id="GO:0006744">
    <property type="term" value="P:ubiquinone biosynthetic process"/>
    <property type="evidence" value="ECO:0007669"/>
    <property type="project" value="UniProtKB-UniRule"/>
</dbReference>
<dbReference type="CDD" id="cd01042">
    <property type="entry name" value="DMQH"/>
    <property type="match status" value="1"/>
</dbReference>
<dbReference type="Gene3D" id="1.20.1260.10">
    <property type="match status" value="1"/>
</dbReference>
<dbReference type="HAMAP" id="MF_01658">
    <property type="entry name" value="COQ7"/>
    <property type="match status" value="1"/>
</dbReference>
<dbReference type="InterPro" id="IPR047809">
    <property type="entry name" value="COQ7_proteobact"/>
</dbReference>
<dbReference type="InterPro" id="IPR012347">
    <property type="entry name" value="Ferritin-like"/>
</dbReference>
<dbReference type="InterPro" id="IPR009078">
    <property type="entry name" value="Ferritin-like_SF"/>
</dbReference>
<dbReference type="InterPro" id="IPR011566">
    <property type="entry name" value="Ubq_synth_Coq7"/>
</dbReference>
<dbReference type="NCBIfam" id="NF033656">
    <property type="entry name" value="DMQ_monoox_COQ7"/>
    <property type="match status" value="1"/>
</dbReference>
<dbReference type="PANTHER" id="PTHR11237:SF4">
    <property type="entry name" value="5-DEMETHOXYUBIQUINONE HYDROXYLASE, MITOCHONDRIAL"/>
    <property type="match status" value="1"/>
</dbReference>
<dbReference type="PANTHER" id="PTHR11237">
    <property type="entry name" value="COENZYME Q10 BIOSYNTHESIS PROTEIN 7"/>
    <property type="match status" value="1"/>
</dbReference>
<dbReference type="Pfam" id="PF03232">
    <property type="entry name" value="COQ7"/>
    <property type="match status" value="1"/>
</dbReference>
<dbReference type="SUPFAM" id="SSF47240">
    <property type="entry name" value="Ferritin-like"/>
    <property type="match status" value="1"/>
</dbReference>
<evidence type="ECO:0000255" key="1">
    <source>
        <dbReference type="HAMAP-Rule" id="MF_01658"/>
    </source>
</evidence>